<dbReference type="EC" id="3.6.-.-" evidence="1"/>
<dbReference type="EMBL" id="CP000230">
    <property type="protein sequence ID" value="ABC24418.1"/>
    <property type="molecule type" value="Genomic_DNA"/>
</dbReference>
<dbReference type="RefSeq" id="WP_011391371.1">
    <property type="nucleotide sequence ID" value="NC_007643.1"/>
</dbReference>
<dbReference type="RefSeq" id="YP_428705.1">
    <property type="nucleotide sequence ID" value="NC_007643.1"/>
</dbReference>
<dbReference type="SMR" id="Q2RN77"/>
<dbReference type="STRING" id="269796.Rru_A3624"/>
<dbReference type="EnsemblBacteria" id="ABC24418">
    <property type="protein sequence ID" value="ABC24418"/>
    <property type="gene ID" value="Rru_A3624"/>
</dbReference>
<dbReference type="KEGG" id="rru:Rru_A3624"/>
<dbReference type="PATRIC" id="fig|269796.9.peg.3745"/>
<dbReference type="eggNOG" id="COG0486">
    <property type="taxonomic scope" value="Bacteria"/>
</dbReference>
<dbReference type="HOGENOM" id="CLU_019624_4_1_5"/>
<dbReference type="PhylomeDB" id="Q2RN77"/>
<dbReference type="Proteomes" id="UP000001929">
    <property type="component" value="Chromosome"/>
</dbReference>
<dbReference type="GO" id="GO:0005737">
    <property type="term" value="C:cytoplasm"/>
    <property type="evidence" value="ECO:0007669"/>
    <property type="project" value="UniProtKB-SubCell"/>
</dbReference>
<dbReference type="GO" id="GO:0005525">
    <property type="term" value="F:GTP binding"/>
    <property type="evidence" value="ECO:0007669"/>
    <property type="project" value="UniProtKB-UniRule"/>
</dbReference>
<dbReference type="GO" id="GO:0003924">
    <property type="term" value="F:GTPase activity"/>
    <property type="evidence" value="ECO:0007669"/>
    <property type="project" value="UniProtKB-UniRule"/>
</dbReference>
<dbReference type="GO" id="GO:0046872">
    <property type="term" value="F:metal ion binding"/>
    <property type="evidence" value="ECO:0007669"/>
    <property type="project" value="UniProtKB-KW"/>
</dbReference>
<dbReference type="GO" id="GO:0030488">
    <property type="term" value="P:tRNA methylation"/>
    <property type="evidence" value="ECO:0007669"/>
    <property type="project" value="TreeGrafter"/>
</dbReference>
<dbReference type="GO" id="GO:0002098">
    <property type="term" value="P:tRNA wobble uridine modification"/>
    <property type="evidence" value="ECO:0007669"/>
    <property type="project" value="TreeGrafter"/>
</dbReference>
<dbReference type="CDD" id="cd04164">
    <property type="entry name" value="trmE"/>
    <property type="match status" value="1"/>
</dbReference>
<dbReference type="CDD" id="cd14858">
    <property type="entry name" value="TrmE_N"/>
    <property type="match status" value="1"/>
</dbReference>
<dbReference type="FunFam" id="3.30.1360.120:FF:000007">
    <property type="entry name" value="tRNA modification GTPase GTPBP3, mitochondrial"/>
    <property type="match status" value="1"/>
</dbReference>
<dbReference type="Gene3D" id="3.40.50.300">
    <property type="entry name" value="P-loop containing nucleotide triphosphate hydrolases"/>
    <property type="match status" value="1"/>
</dbReference>
<dbReference type="Gene3D" id="3.30.1360.120">
    <property type="entry name" value="Probable tRNA modification gtpase trme, domain 1"/>
    <property type="match status" value="1"/>
</dbReference>
<dbReference type="Gene3D" id="1.20.120.430">
    <property type="entry name" value="tRNA modification GTPase MnmE domain 2"/>
    <property type="match status" value="1"/>
</dbReference>
<dbReference type="HAMAP" id="MF_00379">
    <property type="entry name" value="GTPase_MnmE"/>
    <property type="match status" value="1"/>
</dbReference>
<dbReference type="InterPro" id="IPR031168">
    <property type="entry name" value="G_TrmE"/>
</dbReference>
<dbReference type="InterPro" id="IPR006073">
    <property type="entry name" value="GTP-bd"/>
</dbReference>
<dbReference type="InterPro" id="IPR018948">
    <property type="entry name" value="GTP-bd_TrmE_N"/>
</dbReference>
<dbReference type="InterPro" id="IPR004520">
    <property type="entry name" value="GTPase_MnmE"/>
</dbReference>
<dbReference type="InterPro" id="IPR027368">
    <property type="entry name" value="MnmE_dom2"/>
</dbReference>
<dbReference type="InterPro" id="IPR025867">
    <property type="entry name" value="MnmE_helical"/>
</dbReference>
<dbReference type="InterPro" id="IPR027417">
    <property type="entry name" value="P-loop_NTPase"/>
</dbReference>
<dbReference type="InterPro" id="IPR005225">
    <property type="entry name" value="Small_GTP-bd"/>
</dbReference>
<dbReference type="InterPro" id="IPR027266">
    <property type="entry name" value="TrmE/GcvT_dom1"/>
</dbReference>
<dbReference type="NCBIfam" id="TIGR00450">
    <property type="entry name" value="mnmE_trmE_thdF"/>
    <property type="match status" value="1"/>
</dbReference>
<dbReference type="NCBIfam" id="NF003661">
    <property type="entry name" value="PRK05291.1-3"/>
    <property type="match status" value="1"/>
</dbReference>
<dbReference type="NCBIfam" id="TIGR00231">
    <property type="entry name" value="small_GTP"/>
    <property type="match status" value="1"/>
</dbReference>
<dbReference type="PANTHER" id="PTHR42714">
    <property type="entry name" value="TRNA MODIFICATION GTPASE GTPBP3"/>
    <property type="match status" value="1"/>
</dbReference>
<dbReference type="PANTHER" id="PTHR42714:SF2">
    <property type="entry name" value="TRNA MODIFICATION GTPASE GTPBP3, MITOCHONDRIAL"/>
    <property type="match status" value="1"/>
</dbReference>
<dbReference type="Pfam" id="PF01926">
    <property type="entry name" value="MMR_HSR1"/>
    <property type="match status" value="1"/>
</dbReference>
<dbReference type="Pfam" id="PF12631">
    <property type="entry name" value="MnmE_helical"/>
    <property type="match status" value="1"/>
</dbReference>
<dbReference type="Pfam" id="PF10396">
    <property type="entry name" value="TrmE_N"/>
    <property type="match status" value="1"/>
</dbReference>
<dbReference type="SUPFAM" id="SSF52540">
    <property type="entry name" value="P-loop containing nucleoside triphosphate hydrolases"/>
    <property type="match status" value="1"/>
</dbReference>
<dbReference type="SUPFAM" id="SSF116878">
    <property type="entry name" value="TrmE connector domain"/>
    <property type="match status" value="1"/>
</dbReference>
<dbReference type="PROSITE" id="PS51709">
    <property type="entry name" value="G_TRME"/>
    <property type="match status" value="1"/>
</dbReference>
<gene>
    <name evidence="1" type="primary">mnmE</name>
    <name evidence="1" type="synonym">trmE</name>
    <name type="ordered locus">Rru_A3624</name>
</gene>
<protein>
    <recommendedName>
        <fullName evidence="1">tRNA modification GTPase MnmE</fullName>
        <ecNumber evidence="1">3.6.-.-</ecNumber>
    </recommendedName>
</protein>
<organism>
    <name type="scientific">Rhodospirillum rubrum (strain ATCC 11170 / ATH 1.1.1 / DSM 467 / LMG 4362 / NCIMB 8255 / S1)</name>
    <dbReference type="NCBI Taxonomy" id="269796"/>
    <lineage>
        <taxon>Bacteria</taxon>
        <taxon>Pseudomonadati</taxon>
        <taxon>Pseudomonadota</taxon>
        <taxon>Alphaproteobacteria</taxon>
        <taxon>Rhodospirillales</taxon>
        <taxon>Rhodospirillaceae</taxon>
        <taxon>Rhodospirillum</taxon>
    </lineage>
</organism>
<reference key="1">
    <citation type="journal article" date="2011" name="Stand. Genomic Sci.">
        <title>Complete genome sequence of Rhodospirillum rubrum type strain (S1).</title>
        <authorList>
            <person name="Munk A.C."/>
            <person name="Copeland A."/>
            <person name="Lucas S."/>
            <person name="Lapidus A."/>
            <person name="Del Rio T.G."/>
            <person name="Barry K."/>
            <person name="Detter J.C."/>
            <person name="Hammon N."/>
            <person name="Israni S."/>
            <person name="Pitluck S."/>
            <person name="Brettin T."/>
            <person name="Bruce D."/>
            <person name="Han C."/>
            <person name="Tapia R."/>
            <person name="Gilna P."/>
            <person name="Schmutz J."/>
            <person name="Larimer F."/>
            <person name="Land M."/>
            <person name="Kyrpides N.C."/>
            <person name="Mavromatis K."/>
            <person name="Richardson P."/>
            <person name="Rohde M."/>
            <person name="Goeker M."/>
            <person name="Klenk H.P."/>
            <person name="Zhang Y."/>
            <person name="Roberts G.P."/>
            <person name="Reslewic S."/>
            <person name="Schwartz D.C."/>
        </authorList>
    </citation>
    <scope>NUCLEOTIDE SEQUENCE [LARGE SCALE GENOMIC DNA]</scope>
    <source>
        <strain>ATCC 11170 / ATH 1.1.1 / DSM 467 / LMG 4362 / NCIMB 8255 / S1</strain>
    </source>
</reference>
<sequence>MTVDTIFAPATARGRAGVAIVRLSGPRAATALTLLAGRLPEARRATRAALRSPPSGPGPTGPGPEEGGEVLDDALVLWFPAPASFTGEDVAELHIHGGRAVLAAVLGALGDLPGLRPAEAGEFSRRAFLNGRLDLTAAEALADLVDAETQAQRRQALRQADGALVRLYEGWRKTGIGLLAHLEAVLDFPDEDLPPEVETAVRGGIGALADALAGHLDDRHRGERLRDGLQVAVVGAPNVGKSSLVNRLARREAAIVSDIAGTTRDIVEVALDLGGYPLVVADTAGLRETSDGIEAEGVRRARARLAAADLTLAVSDGTVENGADDPAADLTGEAVLRVVTKRDLLDPRAVERWLARGALPVSTLTGEGLDALEAALESRARAFFEGDGTPALTRQRHRSALMEARAALRRAAEAPLAELVAEDLRLALRAIGRITGRVTVDDVLDVIFRDFCIGK</sequence>
<proteinExistence type="inferred from homology"/>
<name>MNME_RHORT</name>
<feature type="chain" id="PRO_0000345895" description="tRNA modification GTPase MnmE">
    <location>
        <begin position="1"/>
        <end position="455"/>
    </location>
</feature>
<feature type="domain" description="TrmE-type G">
    <location>
        <begin position="228"/>
        <end position="381"/>
    </location>
</feature>
<feature type="region of interest" description="Disordered" evidence="2">
    <location>
        <begin position="43"/>
        <end position="67"/>
    </location>
</feature>
<feature type="binding site" evidence="1">
    <location>
        <position position="22"/>
    </location>
    <ligand>
        <name>(6S)-5-formyl-5,6,7,8-tetrahydrofolate</name>
        <dbReference type="ChEBI" id="CHEBI:57457"/>
    </ligand>
</feature>
<feature type="binding site" evidence="1">
    <location>
        <position position="92"/>
    </location>
    <ligand>
        <name>(6S)-5-formyl-5,6,7,8-tetrahydrofolate</name>
        <dbReference type="ChEBI" id="CHEBI:57457"/>
    </ligand>
</feature>
<feature type="binding site" evidence="1">
    <location>
        <position position="132"/>
    </location>
    <ligand>
        <name>(6S)-5-formyl-5,6,7,8-tetrahydrofolate</name>
        <dbReference type="ChEBI" id="CHEBI:57457"/>
    </ligand>
</feature>
<feature type="binding site" evidence="1">
    <location>
        <begin position="238"/>
        <end position="243"/>
    </location>
    <ligand>
        <name>GTP</name>
        <dbReference type="ChEBI" id="CHEBI:37565"/>
    </ligand>
</feature>
<feature type="binding site" evidence="1">
    <location>
        <position position="238"/>
    </location>
    <ligand>
        <name>K(+)</name>
        <dbReference type="ChEBI" id="CHEBI:29103"/>
    </ligand>
</feature>
<feature type="binding site" evidence="1">
    <location>
        <position position="242"/>
    </location>
    <ligand>
        <name>Mg(2+)</name>
        <dbReference type="ChEBI" id="CHEBI:18420"/>
    </ligand>
</feature>
<feature type="binding site" evidence="1">
    <location>
        <begin position="257"/>
        <end position="263"/>
    </location>
    <ligand>
        <name>GTP</name>
        <dbReference type="ChEBI" id="CHEBI:37565"/>
    </ligand>
</feature>
<feature type="binding site" evidence="1">
    <location>
        <position position="257"/>
    </location>
    <ligand>
        <name>K(+)</name>
        <dbReference type="ChEBI" id="CHEBI:29103"/>
    </ligand>
</feature>
<feature type="binding site" evidence="1">
    <location>
        <position position="259"/>
    </location>
    <ligand>
        <name>K(+)</name>
        <dbReference type="ChEBI" id="CHEBI:29103"/>
    </ligand>
</feature>
<feature type="binding site" evidence="1">
    <location>
        <position position="262"/>
    </location>
    <ligand>
        <name>K(+)</name>
        <dbReference type="ChEBI" id="CHEBI:29103"/>
    </ligand>
</feature>
<feature type="binding site" evidence="1">
    <location>
        <position position="263"/>
    </location>
    <ligand>
        <name>Mg(2+)</name>
        <dbReference type="ChEBI" id="CHEBI:18420"/>
    </ligand>
</feature>
<feature type="binding site" evidence="1">
    <location>
        <begin position="282"/>
        <end position="285"/>
    </location>
    <ligand>
        <name>GTP</name>
        <dbReference type="ChEBI" id="CHEBI:37565"/>
    </ligand>
</feature>
<feature type="binding site" evidence="1">
    <location>
        <position position="455"/>
    </location>
    <ligand>
        <name>(6S)-5-formyl-5,6,7,8-tetrahydrofolate</name>
        <dbReference type="ChEBI" id="CHEBI:57457"/>
    </ligand>
</feature>
<evidence type="ECO:0000255" key="1">
    <source>
        <dbReference type="HAMAP-Rule" id="MF_00379"/>
    </source>
</evidence>
<evidence type="ECO:0000256" key="2">
    <source>
        <dbReference type="SAM" id="MobiDB-lite"/>
    </source>
</evidence>
<keyword id="KW-0963">Cytoplasm</keyword>
<keyword id="KW-0342">GTP-binding</keyword>
<keyword id="KW-0378">Hydrolase</keyword>
<keyword id="KW-0460">Magnesium</keyword>
<keyword id="KW-0479">Metal-binding</keyword>
<keyword id="KW-0547">Nucleotide-binding</keyword>
<keyword id="KW-0630">Potassium</keyword>
<keyword id="KW-1185">Reference proteome</keyword>
<keyword id="KW-0819">tRNA processing</keyword>
<accession>Q2RN77</accession>
<comment type="function">
    <text evidence="1">Exhibits a very high intrinsic GTPase hydrolysis rate. Involved in the addition of a carboxymethylaminomethyl (cmnm) group at the wobble position (U34) of certain tRNAs, forming tRNA-cmnm(5)s(2)U34.</text>
</comment>
<comment type="cofactor">
    <cofactor evidence="1">
        <name>K(+)</name>
        <dbReference type="ChEBI" id="CHEBI:29103"/>
    </cofactor>
    <text evidence="1">Binds 1 potassium ion per subunit.</text>
</comment>
<comment type="subunit">
    <text evidence="1">Homodimer. Heterotetramer of two MnmE and two MnmG subunits.</text>
</comment>
<comment type="subcellular location">
    <subcellularLocation>
        <location evidence="1">Cytoplasm</location>
    </subcellularLocation>
</comment>
<comment type="similarity">
    <text evidence="1">Belongs to the TRAFAC class TrmE-Era-EngA-EngB-Septin-like GTPase superfamily. TrmE GTPase family.</text>
</comment>